<accession>P9WLZ4</accession>
<accession>L0T966</accession>
<accession>P64833</accession>
<accession>Q11036</accession>
<protein>
    <recommendedName>
        <fullName>Uncharacterized protein MT1412</fullName>
    </recommendedName>
</protein>
<proteinExistence type="predicted"/>
<dbReference type="EMBL" id="AE000516">
    <property type="protein sequence ID" value="AAK45675.1"/>
    <property type="molecule type" value="Genomic_DNA"/>
</dbReference>
<dbReference type="PIR" id="E70742">
    <property type="entry name" value="E70742"/>
</dbReference>
<dbReference type="RefSeq" id="WP_003407164.1">
    <property type="nucleotide sequence ID" value="NZ_KK341227.1"/>
</dbReference>
<dbReference type="SMR" id="P9WLZ4"/>
<dbReference type="KEGG" id="mtc:MT1412"/>
<dbReference type="PATRIC" id="fig|83331.31.peg.1518"/>
<dbReference type="HOGENOM" id="CLU_083258_1_0_11"/>
<dbReference type="Proteomes" id="UP000001020">
    <property type="component" value="Chromosome"/>
</dbReference>
<dbReference type="GO" id="GO:0015969">
    <property type="term" value="P:guanosine tetraphosphate metabolic process"/>
    <property type="evidence" value="ECO:0007669"/>
    <property type="project" value="InterPro"/>
</dbReference>
<dbReference type="CDD" id="cd05399">
    <property type="entry name" value="NT_Rel-Spo_like"/>
    <property type="match status" value="1"/>
</dbReference>
<dbReference type="Gene3D" id="3.30.460.10">
    <property type="entry name" value="Beta Polymerase, domain 2"/>
    <property type="match status" value="1"/>
</dbReference>
<dbReference type="InterPro" id="IPR052366">
    <property type="entry name" value="GTP_Pyrophosphokinase"/>
</dbReference>
<dbReference type="InterPro" id="IPR043519">
    <property type="entry name" value="NT_sf"/>
</dbReference>
<dbReference type="InterPro" id="IPR007685">
    <property type="entry name" value="RelA_SpoT"/>
</dbReference>
<dbReference type="PANTHER" id="PTHR47837">
    <property type="entry name" value="GTP PYROPHOSPHOKINASE YJBM"/>
    <property type="match status" value="1"/>
</dbReference>
<dbReference type="PANTHER" id="PTHR47837:SF1">
    <property type="entry name" value="GTP PYROPHOSPHOKINASE YJBM"/>
    <property type="match status" value="1"/>
</dbReference>
<dbReference type="Pfam" id="PF04607">
    <property type="entry name" value="RelA_SpoT"/>
    <property type="match status" value="1"/>
</dbReference>
<dbReference type="SMART" id="SM00954">
    <property type="entry name" value="RelA_SpoT"/>
    <property type="match status" value="1"/>
</dbReference>
<dbReference type="SUPFAM" id="SSF81301">
    <property type="entry name" value="Nucleotidyltransferase"/>
    <property type="match status" value="1"/>
</dbReference>
<keyword id="KW-1185">Reference proteome</keyword>
<organism>
    <name type="scientific">Mycobacterium tuberculosis (strain CDC 1551 / Oshkosh)</name>
    <dbReference type="NCBI Taxonomy" id="83331"/>
    <lineage>
        <taxon>Bacteria</taxon>
        <taxon>Bacillati</taxon>
        <taxon>Actinomycetota</taxon>
        <taxon>Actinomycetes</taxon>
        <taxon>Mycobacteriales</taxon>
        <taxon>Mycobacteriaceae</taxon>
        <taxon>Mycobacterium</taxon>
        <taxon>Mycobacterium tuberculosis complex</taxon>
    </lineage>
</organism>
<sequence>MVVALVGSAIVDLHSRPPWSNNAVRRLGVALRDGVDPPVDCPSYAEVMLWHADLAAEVQDRIEGRSWSASELLVTSRAKSQDTLLAKLRRRPYLQLNTIQDIAGVRIDADLLLGEQTRLAREIADHFGADQPAIHDLRDHPHAGYRAVHVWLRLPAGRVEIQIRTILQSLWANFYELLADAYGRGIRYDERPEQLAAGVVPAQLQELVGVMQDASADLAMHEAEWQHCAEIEYPGQRAMALGEASKNKATVLATTKFRLERAINEAESAGGGG</sequence>
<gene>
    <name type="ordered locus">MT1412</name>
</gene>
<reference key="1">
    <citation type="journal article" date="2002" name="J. Bacteriol.">
        <title>Whole-genome comparison of Mycobacterium tuberculosis clinical and laboratory strains.</title>
        <authorList>
            <person name="Fleischmann R.D."/>
            <person name="Alland D."/>
            <person name="Eisen J.A."/>
            <person name="Carpenter L."/>
            <person name="White O."/>
            <person name="Peterson J.D."/>
            <person name="DeBoy R.T."/>
            <person name="Dodson R.J."/>
            <person name="Gwinn M.L."/>
            <person name="Haft D.H."/>
            <person name="Hickey E.K."/>
            <person name="Kolonay J.F."/>
            <person name="Nelson W.C."/>
            <person name="Umayam L.A."/>
            <person name="Ermolaeva M.D."/>
            <person name="Salzberg S.L."/>
            <person name="Delcher A."/>
            <person name="Utterback T.R."/>
            <person name="Weidman J.F."/>
            <person name="Khouri H.M."/>
            <person name="Gill J."/>
            <person name="Mikula A."/>
            <person name="Bishai W."/>
            <person name="Jacobs W.R. Jr."/>
            <person name="Venter J.C."/>
            <person name="Fraser C.M."/>
        </authorList>
    </citation>
    <scope>NUCLEOTIDE SEQUENCE [LARGE SCALE GENOMIC DNA]</scope>
    <source>
        <strain>CDC 1551 / Oshkosh</strain>
    </source>
</reference>
<feature type="chain" id="PRO_0000427393" description="Uncharacterized protein MT1412">
    <location>
        <begin position="1"/>
        <end position="273"/>
    </location>
</feature>
<name>Y1366_MYCTO</name>